<evidence type="ECO:0000255" key="1">
    <source>
        <dbReference type="HAMAP-Rule" id="MF_00679"/>
    </source>
</evidence>
<keyword id="KW-0067">ATP-binding</keyword>
<keyword id="KW-0143">Chaperone</keyword>
<keyword id="KW-0547">Nucleotide-binding</keyword>
<gene>
    <name evidence="1" type="primary">hscA</name>
    <name type="ordered locus">Shewmr4_1743</name>
</gene>
<accession>Q0HJF0</accession>
<proteinExistence type="inferred from homology"/>
<dbReference type="EMBL" id="CP000446">
    <property type="protein sequence ID" value="ABI38817.1"/>
    <property type="molecule type" value="Genomic_DNA"/>
</dbReference>
<dbReference type="RefSeq" id="WP_011622514.1">
    <property type="nucleotide sequence ID" value="NC_008321.1"/>
</dbReference>
<dbReference type="SMR" id="Q0HJF0"/>
<dbReference type="KEGG" id="she:Shewmr4_1743"/>
<dbReference type="HOGENOM" id="CLU_005965_2_1_6"/>
<dbReference type="GO" id="GO:0005524">
    <property type="term" value="F:ATP binding"/>
    <property type="evidence" value="ECO:0007669"/>
    <property type="project" value="UniProtKB-KW"/>
</dbReference>
<dbReference type="GO" id="GO:0016887">
    <property type="term" value="F:ATP hydrolysis activity"/>
    <property type="evidence" value="ECO:0007669"/>
    <property type="project" value="UniProtKB-UniRule"/>
</dbReference>
<dbReference type="GO" id="GO:0140662">
    <property type="term" value="F:ATP-dependent protein folding chaperone"/>
    <property type="evidence" value="ECO:0007669"/>
    <property type="project" value="InterPro"/>
</dbReference>
<dbReference type="GO" id="GO:0051082">
    <property type="term" value="F:unfolded protein binding"/>
    <property type="evidence" value="ECO:0007669"/>
    <property type="project" value="InterPro"/>
</dbReference>
<dbReference type="GO" id="GO:0016226">
    <property type="term" value="P:iron-sulfur cluster assembly"/>
    <property type="evidence" value="ECO:0007669"/>
    <property type="project" value="InterPro"/>
</dbReference>
<dbReference type="FunFam" id="3.30.420.40:FF:000046">
    <property type="entry name" value="Chaperone protein HscA"/>
    <property type="match status" value="1"/>
</dbReference>
<dbReference type="FunFam" id="2.60.34.10:FF:000005">
    <property type="entry name" value="Chaperone protein HscA homolog"/>
    <property type="match status" value="1"/>
</dbReference>
<dbReference type="Gene3D" id="1.20.1270.10">
    <property type="match status" value="1"/>
</dbReference>
<dbReference type="Gene3D" id="3.30.420.40">
    <property type="match status" value="2"/>
</dbReference>
<dbReference type="Gene3D" id="3.90.640.10">
    <property type="entry name" value="Actin, Chain A, domain 4"/>
    <property type="match status" value="1"/>
</dbReference>
<dbReference type="Gene3D" id="2.60.34.10">
    <property type="entry name" value="Substrate Binding Domain Of DNAk, Chain A, domain 1"/>
    <property type="match status" value="1"/>
</dbReference>
<dbReference type="HAMAP" id="MF_00679">
    <property type="entry name" value="HscA"/>
    <property type="match status" value="1"/>
</dbReference>
<dbReference type="InterPro" id="IPR043129">
    <property type="entry name" value="ATPase_NBD"/>
</dbReference>
<dbReference type="InterPro" id="IPR018181">
    <property type="entry name" value="Heat_shock_70_CS"/>
</dbReference>
<dbReference type="InterPro" id="IPR029048">
    <property type="entry name" value="HSP70_C_sf"/>
</dbReference>
<dbReference type="InterPro" id="IPR029047">
    <property type="entry name" value="HSP70_peptide-bd_sf"/>
</dbReference>
<dbReference type="InterPro" id="IPR013126">
    <property type="entry name" value="Hsp_70_fam"/>
</dbReference>
<dbReference type="InterPro" id="IPR010236">
    <property type="entry name" value="ISC_FeS_clus_asmbl_HscA"/>
</dbReference>
<dbReference type="NCBIfam" id="TIGR01991">
    <property type="entry name" value="HscA"/>
    <property type="match status" value="1"/>
</dbReference>
<dbReference type="NCBIfam" id="NF003520">
    <property type="entry name" value="PRK05183.1"/>
    <property type="match status" value="1"/>
</dbReference>
<dbReference type="PANTHER" id="PTHR19375">
    <property type="entry name" value="HEAT SHOCK PROTEIN 70KDA"/>
    <property type="match status" value="1"/>
</dbReference>
<dbReference type="Pfam" id="PF00012">
    <property type="entry name" value="HSP70"/>
    <property type="match status" value="1"/>
</dbReference>
<dbReference type="PRINTS" id="PR00301">
    <property type="entry name" value="HEATSHOCK70"/>
</dbReference>
<dbReference type="SUPFAM" id="SSF53067">
    <property type="entry name" value="Actin-like ATPase domain"/>
    <property type="match status" value="2"/>
</dbReference>
<dbReference type="SUPFAM" id="SSF100934">
    <property type="entry name" value="Heat shock protein 70kD (HSP70), C-terminal subdomain"/>
    <property type="match status" value="1"/>
</dbReference>
<dbReference type="SUPFAM" id="SSF100920">
    <property type="entry name" value="Heat shock protein 70kD (HSP70), peptide-binding domain"/>
    <property type="match status" value="1"/>
</dbReference>
<dbReference type="PROSITE" id="PS00297">
    <property type="entry name" value="HSP70_1"/>
    <property type="match status" value="1"/>
</dbReference>
<dbReference type="PROSITE" id="PS00329">
    <property type="entry name" value="HSP70_2"/>
    <property type="match status" value="1"/>
</dbReference>
<sequence>MALLQIAEPGQSAAPHQHRLAVGIDLGTTNSLVAAVRSGVTATLPDENGQHSLPSIVRYTQDGIEVGQVAALSSAQDPKNTIVSVKRFMGRSLTDIQSGEQAFPYQFEASENGLPLFVTPQGQVNPVQVSAEILRPLVERAEKTLGGELQGVVITVPAYFDDAQRQGTKDAASLLGVKVLRLLNEPTAAAIAYGLDSKQEGVIAIYDLGGGTFDISILRLNRGVFEVLATGGDSALGGDDFDHLLQAHMQQVWQLTNLDPQLSRQLLIEARRVKEALTDASDVEASLTLADGTVLKQVVTKAEFDNLISALVKKTIASCRRTLRDAGVTADEVLETVMVGGSTRVPLVREQVEAFFGKAPLTSIDPDRVVAIGAAIQADILVGNKPESELLLLDVIPLSLGIETMGGLVEKVVSRNTTIPVARAQEFTTFKDGQTAMAFHVVQGERELVDDCRSLARFTLKGIPPLAAGAAHIRVTFQVDADGLLSVTAMEKSTGVQSSIQVKPSFGLSDTEIATMLKDSMKHAKEDISRRMLAEQQVEAARVLESLNAALAKDGDLLTSDERQQIDAVMAQLAEIARGDDADAIKQAIEVLDEHTQDFAAKRMDNSIRVAFKGQSIDNI</sequence>
<reference key="1">
    <citation type="submission" date="2006-08" db="EMBL/GenBank/DDBJ databases">
        <title>Complete sequence of Shewanella sp. MR-4.</title>
        <authorList>
            <consortium name="US DOE Joint Genome Institute"/>
            <person name="Copeland A."/>
            <person name="Lucas S."/>
            <person name="Lapidus A."/>
            <person name="Barry K."/>
            <person name="Detter J.C."/>
            <person name="Glavina del Rio T."/>
            <person name="Hammon N."/>
            <person name="Israni S."/>
            <person name="Dalin E."/>
            <person name="Tice H."/>
            <person name="Pitluck S."/>
            <person name="Kiss H."/>
            <person name="Brettin T."/>
            <person name="Bruce D."/>
            <person name="Han C."/>
            <person name="Tapia R."/>
            <person name="Gilna P."/>
            <person name="Schmutz J."/>
            <person name="Larimer F."/>
            <person name="Land M."/>
            <person name="Hauser L."/>
            <person name="Kyrpides N."/>
            <person name="Mikhailova N."/>
            <person name="Nealson K."/>
            <person name="Konstantinidis K."/>
            <person name="Klappenbach J."/>
            <person name="Tiedje J."/>
            <person name="Richardson P."/>
        </authorList>
    </citation>
    <scope>NUCLEOTIDE SEQUENCE [LARGE SCALE GENOMIC DNA]</scope>
    <source>
        <strain>MR-4</strain>
    </source>
</reference>
<comment type="function">
    <text evidence="1">Chaperone involved in the maturation of iron-sulfur cluster-containing proteins. Has a low intrinsic ATPase activity which is markedly stimulated by HscB.</text>
</comment>
<comment type="similarity">
    <text evidence="1">Belongs to the heat shock protein 70 family.</text>
</comment>
<name>HSCA_SHESM</name>
<feature type="chain" id="PRO_1000044892" description="Chaperone protein HscA homolog">
    <location>
        <begin position="1"/>
        <end position="620"/>
    </location>
</feature>
<protein>
    <recommendedName>
        <fullName evidence="1">Chaperone protein HscA homolog</fullName>
    </recommendedName>
</protein>
<organism>
    <name type="scientific">Shewanella sp. (strain MR-4)</name>
    <dbReference type="NCBI Taxonomy" id="60480"/>
    <lineage>
        <taxon>Bacteria</taxon>
        <taxon>Pseudomonadati</taxon>
        <taxon>Pseudomonadota</taxon>
        <taxon>Gammaproteobacteria</taxon>
        <taxon>Alteromonadales</taxon>
        <taxon>Shewanellaceae</taxon>
        <taxon>Shewanella</taxon>
    </lineage>
</organism>